<sequence length="258" mass="27951">MTSRMPLMAGNWKMNLNHLEAIAHVQKLAFALADKDYEACEVAVLPPYTDLRSVQTLVDGDKLKIKYGAQDVSAHDSGAYTGEISGSMLAKLKCTYVAVGHSERRQYHHETDEIVNAKVKASFRHGLIPILCVGEELEVREAGNHVTHTLTQVEGGLKDVPAEQAETIVIAYEPVWAIGTGKVCGADDAQEVCAAIRAKLAELYSQELADQVRIQYGGSVKSGNVAEIMAKPDIDGALVGGASLDADEFVKIARFRDQ</sequence>
<accession>Q829W1</accession>
<feature type="chain" id="PRO_0000090294" description="Triosephosphate isomerase">
    <location>
        <begin position="1"/>
        <end position="258"/>
    </location>
</feature>
<feature type="active site" description="Electrophile" evidence="1">
    <location>
        <position position="101"/>
    </location>
</feature>
<feature type="active site" description="Proton acceptor" evidence="1">
    <location>
        <position position="173"/>
    </location>
</feature>
<feature type="binding site" evidence="1">
    <location>
        <begin position="11"/>
        <end position="13"/>
    </location>
    <ligand>
        <name>substrate</name>
    </ligand>
</feature>
<feature type="binding site" evidence="1">
    <location>
        <position position="179"/>
    </location>
    <ligand>
        <name>substrate</name>
    </ligand>
</feature>
<feature type="binding site" evidence="1">
    <location>
        <position position="219"/>
    </location>
    <ligand>
        <name>substrate</name>
    </ligand>
</feature>
<feature type="binding site" evidence="1">
    <location>
        <begin position="240"/>
        <end position="241"/>
    </location>
    <ligand>
        <name>substrate</name>
    </ligand>
</feature>
<protein>
    <recommendedName>
        <fullName evidence="1">Triosephosphate isomerase</fullName>
        <shortName evidence="1">TIM</shortName>
        <shortName evidence="1">TPI</shortName>
        <ecNumber evidence="1">5.3.1.1</ecNumber>
    </recommendedName>
    <alternativeName>
        <fullName evidence="1">Triose-phosphate isomerase</fullName>
    </alternativeName>
</protein>
<dbReference type="EC" id="5.3.1.1" evidence="1"/>
<dbReference type="EMBL" id="BA000030">
    <property type="protein sequence ID" value="BAC74009.1"/>
    <property type="molecule type" value="Genomic_DNA"/>
</dbReference>
<dbReference type="SMR" id="Q829W1"/>
<dbReference type="KEGG" id="sma:SAVERM_6298"/>
<dbReference type="eggNOG" id="COG0149">
    <property type="taxonomic scope" value="Bacteria"/>
</dbReference>
<dbReference type="HOGENOM" id="CLU_024251_2_3_11"/>
<dbReference type="OrthoDB" id="9809429at2"/>
<dbReference type="UniPathway" id="UPA00109">
    <property type="reaction ID" value="UER00189"/>
</dbReference>
<dbReference type="UniPathway" id="UPA00138"/>
<dbReference type="Proteomes" id="UP000000428">
    <property type="component" value="Chromosome"/>
</dbReference>
<dbReference type="GO" id="GO:0005829">
    <property type="term" value="C:cytosol"/>
    <property type="evidence" value="ECO:0007669"/>
    <property type="project" value="TreeGrafter"/>
</dbReference>
<dbReference type="GO" id="GO:0004807">
    <property type="term" value="F:triose-phosphate isomerase activity"/>
    <property type="evidence" value="ECO:0007669"/>
    <property type="project" value="UniProtKB-UniRule"/>
</dbReference>
<dbReference type="GO" id="GO:0006094">
    <property type="term" value="P:gluconeogenesis"/>
    <property type="evidence" value="ECO:0007669"/>
    <property type="project" value="UniProtKB-UniRule"/>
</dbReference>
<dbReference type="GO" id="GO:0046166">
    <property type="term" value="P:glyceraldehyde-3-phosphate biosynthetic process"/>
    <property type="evidence" value="ECO:0007669"/>
    <property type="project" value="TreeGrafter"/>
</dbReference>
<dbReference type="GO" id="GO:0019563">
    <property type="term" value="P:glycerol catabolic process"/>
    <property type="evidence" value="ECO:0007669"/>
    <property type="project" value="TreeGrafter"/>
</dbReference>
<dbReference type="GO" id="GO:0006096">
    <property type="term" value="P:glycolytic process"/>
    <property type="evidence" value="ECO:0007669"/>
    <property type="project" value="UniProtKB-UniRule"/>
</dbReference>
<dbReference type="CDD" id="cd00311">
    <property type="entry name" value="TIM"/>
    <property type="match status" value="1"/>
</dbReference>
<dbReference type="FunFam" id="3.20.20.70:FF:000020">
    <property type="entry name" value="Triosephosphate isomerase"/>
    <property type="match status" value="1"/>
</dbReference>
<dbReference type="Gene3D" id="3.20.20.70">
    <property type="entry name" value="Aldolase class I"/>
    <property type="match status" value="1"/>
</dbReference>
<dbReference type="HAMAP" id="MF_00147_B">
    <property type="entry name" value="TIM_B"/>
    <property type="match status" value="1"/>
</dbReference>
<dbReference type="InterPro" id="IPR013785">
    <property type="entry name" value="Aldolase_TIM"/>
</dbReference>
<dbReference type="InterPro" id="IPR035990">
    <property type="entry name" value="TIM_sf"/>
</dbReference>
<dbReference type="InterPro" id="IPR022896">
    <property type="entry name" value="TrioseP_Isoase_bac/euk"/>
</dbReference>
<dbReference type="InterPro" id="IPR000652">
    <property type="entry name" value="Triosephosphate_isomerase"/>
</dbReference>
<dbReference type="InterPro" id="IPR020861">
    <property type="entry name" value="Triosephosphate_isomerase_AS"/>
</dbReference>
<dbReference type="NCBIfam" id="TIGR00419">
    <property type="entry name" value="tim"/>
    <property type="match status" value="1"/>
</dbReference>
<dbReference type="PANTHER" id="PTHR21139">
    <property type="entry name" value="TRIOSEPHOSPHATE ISOMERASE"/>
    <property type="match status" value="1"/>
</dbReference>
<dbReference type="PANTHER" id="PTHR21139:SF42">
    <property type="entry name" value="TRIOSEPHOSPHATE ISOMERASE"/>
    <property type="match status" value="1"/>
</dbReference>
<dbReference type="Pfam" id="PF00121">
    <property type="entry name" value="TIM"/>
    <property type="match status" value="1"/>
</dbReference>
<dbReference type="SUPFAM" id="SSF51351">
    <property type="entry name" value="Triosephosphate isomerase (TIM)"/>
    <property type="match status" value="1"/>
</dbReference>
<dbReference type="PROSITE" id="PS00171">
    <property type="entry name" value="TIM_1"/>
    <property type="match status" value="1"/>
</dbReference>
<dbReference type="PROSITE" id="PS51440">
    <property type="entry name" value="TIM_2"/>
    <property type="match status" value="1"/>
</dbReference>
<keyword id="KW-0963">Cytoplasm</keyword>
<keyword id="KW-0312">Gluconeogenesis</keyword>
<keyword id="KW-0324">Glycolysis</keyword>
<keyword id="KW-0413">Isomerase</keyword>
<keyword id="KW-1185">Reference proteome</keyword>
<evidence type="ECO:0000255" key="1">
    <source>
        <dbReference type="HAMAP-Rule" id="MF_00147"/>
    </source>
</evidence>
<gene>
    <name evidence="1" type="primary">tpiA</name>
    <name type="synonym">tpi</name>
    <name type="ordered locus">SAV_6298</name>
</gene>
<organism>
    <name type="scientific">Streptomyces avermitilis (strain ATCC 31267 / DSM 46492 / JCM 5070 / NBRC 14893 / NCIMB 12804 / NRRL 8165 / MA-4680)</name>
    <dbReference type="NCBI Taxonomy" id="227882"/>
    <lineage>
        <taxon>Bacteria</taxon>
        <taxon>Bacillati</taxon>
        <taxon>Actinomycetota</taxon>
        <taxon>Actinomycetes</taxon>
        <taxon>Kitasatosporales</taxon>
        <taxon>Streptomycetaceae</taxon>
        <taxon>Streptomyces</taxon>
    </lineage>
</organism>
<proteinExistence type="inferred from homology"/>
<comment type="function">
    <text evidence="1">Involved in the gluconeogenesis. Catalyzes stereospecifically the conversion of dihydroxyacetone phosphate (DHAP) to D-glyceraldehyde-3-phosphate (G3P).</text>
</comment>
<comment type="catalytic activity">
    <reaction evidence="1">
        <text>D-glyceraldehyde 3-phosphate = dihydroxyacetone phosphate</text>
        <dbReference type="Rhea" id="RHEA:18585"/>
        <dbReference type="ChEBI" id="CHEBI:57642"/>
        <dbReference type="ChEBI" id="CHEBI:59776"/>
        <dbReference type="EC" id="5.3.1.1"/>
    </reaction>
</comment>
<comment type="pathway">
    <text evidence="1">Carbohydrate biosynthesis; gluconeogenesis.</text>
</comment>
<comment type="pathway">
    <text evidence="1">Carbohydrate degradation; glycolysis; D-glyceraldehyde 3-phosphate from glycerone phosphate: step 1/1.</text>
</comment>
<comment type="subunit">
    <text evidence="1">Homodimer.</text>
</comment>
<comment type="subcellular location">
    <subcellularLocation>
        <location evidence="1">Cytoplasm</location>
    </subcellularLocation>
</comment>
<comment type="similarity">
    <text evidence="1">Belongs to the triosephosphate isomerase family.</text>
</comment>
<name>TPIS_STRAW</name>
<reference key="1">
    <citation type="journal article" date="2001" name="Proc. Natl. Acad. Sci. U.S.A.">
        <title>Genome sequence of an industrial microorganism Streptomyces avermitilis: deducing the ability of producing secondary metabolites.</title>
        <authorList>
            <person name="Omura S."/>
            <person name="Ikeda H."/>
            <person name="Ishikawa J."/>
            <person name="Hanamoto A."/>
            <person name="Takahashi C."/>
            <person name="Shinose M."/>
            <person name="Takahashi Y."/>
            <person name="Horikawa H."/>
            <person name="Nakazawa H."/>
            <person name="Osonoe T."/>
            <person name="Kikuchi H."/>
            <person name="Shiba T."/>
            <person name="Sakaki Y."/>
            <person name="Hattori M."/>
        </authorList>
    </citation>
    <scope>NUCLEOTIDE SEQUENCE [LARGE SCALE GENOMIC DNA]</scope>
    <source>
        <strain>ATCC 31267 / DSM 46492 / JCM 5070 / NBRC 14893 / NCIMB 12804 / NRRL 8165 / MA-4680</strain>
    </source>
</reference>
<reference key="2">
    <citation type="journal article" date="2003" name="Nat. Biotechnol.">
        <title>Complete genome sequence and comparative analysis of the industrial microorganism Streptomyces avermitilis.</title>
        <authorList>
            <person name="Ikeda H."/>
            <person name="Ishikawa J."/>
            <person name="Hanamoto A."/>
            <person name="Shinose M."/>
            <person name="Kikuchi H."/>
            <person name="Shiba T."/>
            <person name="Sakaki Y."/>
            <person name="Hattori M."/>
            <person name="Omura S."/>
        </authorList>
    </citation>
    <scope>NUCLEOTIDE SEQUENCE [LARGE SCALE GENOMIC DNA]</scope>
    <source>
        <strain>ATCC 31267 / DSM 46492 / JCM 5070 / NBRC 14893 / NCIMB 12804 / NRRL 8165 / MA-4680</strain>
    </source>
</reference>